<accession>Q5PDF0</accession>
<gene>
    <name evidence="1" type="primary">rapA</name>
    <name type="ordered locus">SPA0097</name>
</gene>
<reference key="1">
    <citation type="journal article" date="2004" name="Nat. Genet.">
        <title>Comparison of genome degradation in Paratyphi A and Typhi, human-restricted serovars of Salmonella enterica that cause typhoid.</title>
        <authorList>
            <person name="McClelland M."/>
            <person name="Sanderson K.E."/>
            <person name="Clifton S.W."/>
            <person name="Latreille P."/>
            <person name="Porwollik S."/>
            <person name="Sabo A."/>
            <person name="Meyer R."/>
            <person name="Bieri T."/>
            <person name="Ozersky P."/>
            <person name="McLellan M."/>
            <person name="Harkins C.R."/>
            <person name="Wang C."/>
            <person name="Nguyen C."/>
            <person name="Berghoff A."/>
            <person name="Elliott G."/>
            <person name="Kohlberg S."/>
            <person name="Strong C."/>
            <person name="Du F."/>
            <person name="Carter J."/>
            <person name="Kremizki C."/>
            <person name="Layman D."/>
            <person name="Leonard S."/>
            <person name="Sun H."/>
            <person name="Fulton L."/>
            <person name="Nash W."/>
            <person name="Miner T."/>
            <person name="Minx P."/>
            <person name="Delehaunty K."/>
            <person name="Fronick C."/>
            <person name="Magrini V."/>
            <person name="Nhan M."/>
            <person name="Warren W."/>
            <person name="Florea L."/>
            <person name="Spieth J."/>
            <person name="Wilson R.K."/>
        </authorList>
    </citation>
    <scope>NUCLEOTIDE SEQUENCE [LARGE SCALE GENOMIC DNA]</scope>
    <source>
        <strain>ATCC 9150 / SARB42</strain>
    </source>
</reference>
<feature type="chain" id="PRO_1000088374" description="RNA polymerase-associated protein RapA">
    <location>
        <begin position="1"/>
        <end position="968"/>
    </location>
</feature>
<feature type="domain" description="Helicase ATP-binding" evidence="1">
    <location>
        <begin position="164"/>
        <end position="334"/>
    </location>
</feature>
<feature type="domain" description="Helicase C-terminal" evidence="1">
    <location>
        <begin position="490"/>
        <end position="685"/>
    </location>
</feature>
<feature type="short sequence motif" description="DEAH box">
    <location>
        <begin position="280"/>
        <end position="283"/>
    </location>
</feature>
<feature type="binding site" evidence="1">
    <location>
        <begin position="177"/>
        <end position="184"/>
    </location>
    <ligand>
        <name>ATP</name>
        <dbReference type="ChEBI" id="CHEBI:30616"/>
    </ligand>
</feature>
<evidence type="ECO:0000255" key="1">
    <source>
        <dbReference type="HAMAP-Rule" id="MF_01821"/>
    </source>
</evidence>
<comment type="function">
    <text evidence="1">Transcription regulator that activates transcription by stimulating RNA polymerase (RNAP) recycling in case of stress conditions such as supercoiled DNA or high salt concentrations. Probably acts by releasing the RNAP, when it is trapped or immobilized on tightly supercoiled DNA. Does not activate transcription on linear DNA. Probably not involved in DNA repair.</text>
</comment>
<comment type="subunit">
    <text evidence="1">Interacts with the RNAP. Has a higher affinity for the core RNAP than for the holoenzyme. Its ATPase activity is stimulated by binding to RNAP.</text>
</comment>
<comment type="similarity">
    <text evidence="1">Belongs to the SNF2/RAD54 helicase family. RapA subfamily.</text>
</comment>
<organism>
    <name type="scientific">Salmonella paratyphi A (strain ATCC 9150 / SARB42)</name>
    <dbReference type="NCBI Taxonomy" id="295319"/>
    <lineage>
        <taxon>Bacteria</taxon>
        <taxon>Pseudomonadati</taxon>
        <taxon>Pseudomonadota</taxon>
        <taxon>Gammaproteobacteria</taxon>
        <taxon>Enterobacterales</taxon>
        <taxon>Enterobacteriaceae</taxon>
        <taxon>Salmonella</taxon>
    </lineage>
</organism>
<sequence>MPFTFGQRWISDTESELGLGTVVAMDARTVTLLFPSTGENRLYARSDSPVTRVMFNPGDTITSHEGWQLHIDEVKEENGLLVYVGTRLDTEETNVTLREVLLDSKLVFSKPQDRLFAGQIDRMDRFALRYRARKFQSEQYRMPYSGLRGQRTNLIPHQLNIAHDVGRRHAPRVLLADEVGLGKTIEAGMILHQQLLSGAAERVLIIVPETLQHQWLVEMLRRFNLRFALFDDERYTEAQHDAYNPFETEQLVICSLDFARRNKQRLEHLCDAEWDLLVVDEAHHLVWSTDAPSREYMAIEQLAERVPGVLLLTATPEQLGMESHFARLRLLDPNRFHDFEQFVEEQKNYRPVADAVAMLLAGNKLSNDELNRLGDLIGEQDIEPLLQAANSDRDDAQAARDELVSMLMDRHGTSRVLFRNTRNGVKGFPKRELHTVKLPLPTQYQTAIKVSGIMGARKSAEDRARDMLYPEQIYQEFEGDTGTWWNFDPRVEWLMGYLTSHRSQKVLVICAKATTALQLEQVLREREGIRAAVFHEGMSIIERDRAAAWFAEEDTGAQVLLCSEIGSEGRNFQFASNLVMFDLPFNPDLLEQRIGRLDRIGQAHDIQIHVPYLEKTAQSVLVRWYHEGLDAFEHTCPTGRAIYDSAYASLINYLAAPEETDGFDDLIKSCREQHEALKAQLEQGRDRLLEIHSNGGEKAQQLAQSIEEQDDDTNLIAFAMNLFDIVGINQDDRGDNLIVLTPSDHMLVPDFPGLPEDGCTITFERDVALSREDAQFITWEHPLIRNGLDLILSGDTGSSTISLLKNKALPVGTLLVELVYVVEAQAPKQLQLNRFLPPTPVRMLLDKNGNNLAAQVEFETFNRQLSAVNRHTGSKLVNAVQQDVHAILQLGETQIEKSARALIDNARREADEKLSGELSRLEALRAVNPNIRDDELAAIDSNRQQVLESLNQAGWRLDALRFIVVTHQ</sequence>
<keyword id="KW-0010">Activator</keyword>
<keyword id="KW-0067">ATP-binding</keyword>
<keyword id="KW-0238">DNA-binding</keyword>
<keyword id="KW-0347">Helicase</keyword>
<keyword id="KW-0378">Hydrolase</keyword>
<keyword id="KW-0547">Nucleotide-binding</keyword>
<keyword id="KW-0804">Transcription</keyword>
<keyword id="KW-0805">Transcription regulation</keyword>
<proteinExistence type="inferred from homology"/>
<name>RAPA_SALPA</name>
<protein>
    <recommendedName>
        <fullName evidence="1">RNA polymerase-associated protein RapA</fullName>
        <ecNumber evidence="1">3.6.4.-</ecNumber>
    </recommendedName>
    <alternativeName>
        <fullName evidence="1">ATP-dependent helicase HepA</fullName>
    </alternativeName>
</protein>
<dbReference type="EC" id="3.6.4.-" evidence="1"/>
<dbReference type="EMBL" id="CP000026">
    <property type="protein sequence ID" value="AAV76130.1"/>
    <property type="molecule type" value="Genomic_DNA"/>
</dbReference>
<dbReference type="RefSeq" id="WP_001116900.1">
    <property type="nucleotide sequence ID" value="NC_006511.1"/>
</dbReference>
<dbReference type="SMR" id="Q5PDF0"/>
<dbReference type="KEGG" id="spt:SPA0097"/>
<dbReference type="HOGENOM" id="CLU_011520_0_0_6"/>
<dbReference type="Proteomes" id="UP000008185">
    <property type="component" value="Chromosome"/>
</dbReference>
<dbReference type="GO" id="GO:0005524">
    <property type="term" value="F:ATP binding"/>
    <property type="evidence" value="ECO:0007669"/>
    <property type="project" value="UniProtKB-UniRule"/>
</dbReference>
<dbReference type="GO" id="GO:0003677">
    <property type="term" value="F:DNA binding"/>
    <property type="evidence" value="ECO:0007669"/>
    <property type="project" value="UniProtKB-KW"/>
</dbReference>
<dbReference type="GO" id="GO:0004386">
    <property type="term" value="F:helicase activity"/>
    <property type="evidence" value="ECO:0007669"/>
    <property type="project" value="UniProtKB-UniRule"/>
</dbReference>
<dbReference type="GO" id="GO:0016817">
    <property type="term" value="F:hydrolase activity, acting on acid anhydrides"/>
    <property type="evidence" value="ECO:0007669"/>
    <property type="project" value="InterPro"/>
</dbReference>
<dbReference type="GO" id="GO:0006355">
    <property type="term" value="P:regulation of DNA-templated transcription"/>
    <property type="evidence" value="ECO:0007669"/>
    <property type="project" value="UniProtKB-UniRule"/>
</dbReference>
<dbReference type="CDD" id="cd18011">
    <property type="entry name" value="DEXDc_RapA"/>
    <property type="match status" value="1"/>
</dbReference>
<dbReference type="CDD" id="cd18793">
    <property type="entry name" value="SF2_C_SNF"/>
    <property type="match status" value="1"/>
</dbReference>
<dbReference type="FunFam" id="2.30.30.140:FF:000020">
    <property type="entry name" value="RNA polymerase-associated protein RapA"/>
    <property type="match status" value="1"/>
</dbReference>
<dbReference type="FunFam" id="3.30.360.80:FF:000001">
    <property type="entry name" value="RNA polymerase-associated protein RapA"/>
    <property type="match status" value="1"/>
</dbReference>
<dbReference type="FunFam" id="3.40.50.10810:FF:000012">
    <property type="entry name" value="RNA polymerase-associated protein RapA"/>
    <property type="match status" value="1"/>
</dbReference>
<dbReference type="FunFam" id="3.40.50.300:FF:000350">
    <property type="entry name" value="RNA polymerase-associated protein RapA"/>
    <property type="match status" value="1"/>
</dbReference>
<dbReference type="Gene3D" id="2.30.30.140">
    <property type="match status" value="1"/>
</dbReference>
<dbReference type="Gene3D" id="2.30.30.930">
    <property type="match status" value="1"/>
</dbReference>
<dbReference type="Gene3D" id="3.30.360.80">
    <property type="match status" value="1"/>
</dbReference>
<dbReference type="Gene3D" id="6.10.140.1500">
    <property type="match status" value="1"/>
</dbReference>
<dbReference type="Gene3D" id="6.10.140.2230">
    <property type="match status" value="1"/>
</dbReference>
<dbReference type="Gene3D" id="3.40.50.300">
    <property type="entry name" value="P-loop containing nucleotide triphosphate hydrolases"/>
    <property type="match status" value="1"/>
</dbReference>
<dbReference type="Gene3D" id="3.40.50.10810">
    <property type="entry name" value="Tandem AAA-ATPase domain"/>
    <property type="match status" value="1"/>
</dbReference>
<dbReference type="HAMAP" id="MF_01821">
    <property type="entry name" value="Helicase_RapA"/>
    <property type="match status" value="1"/>
</dbReference>
<dbReference type="InterPro" id="IPR014001">
    <property type="entry name" value="Helicase_ATP-bd"/>
</dbReference>
<dbReference type="InterPro" id="IPR001650">
    <property type="entry name" value="Helicase_C-like"/>
</dbReference>
<dbReference type="InterPro" id="IPR023949">
    <property type="entry name" value="Helicase_RapA"/>
</dbReference>
<dbReference type="InterPro" id="IPR027417">
    <property type="entry name" value="P-loop_NTPase"/>
</dbReference>
<dbReference type="InterPro" id="IPR022737">
    <property type="entry name" value="RapA_C"/>
</dbReference>
<dbReference type="InterPro" id="IPR038718">
    <property type="entry name" value="SNF2-like_sf"/>
</dbReference>
<dbReference type="InterPro" id="IPR049730">
    <property type="entry name" value="SNF2/RAD54-like_C"/>
</dbReference>
<dbReference type="InterPro" id="IPR000330">
    <property type="entry name" value="SNF2_N"/>
</dbReference>
<dbReference type="InterPro" id="IPR040765">
    <property type="entry name" value="Tudor_1_RapA"/>
</dbReference>
<dbReference type="InterPro" id="IPR040766">
    <property type="entry name" value="Tudor_2_RapA"/>
</dbReference>
<dbReference type="NCBIfam" id="NF003426">
    <property type="entry name" value="PRK04914.1"/>
    <property type="match status" value="1"/>
</dbReference>
<dbReference type="PANTHER" id="PTHR45766">
    <property type="entry name" value="DNA ANNEALING HELICASE AND ENDONUCLEASE ZRANB3 FAMILY MEMBER"/>
    <property type="match status" value="1"/>
</dbReference>
<dbReference type="PANTHER" id="PTHR45766:SF6">
    <property type="entry name" value="SWI_SNF-RELATED MATRIX-ASSOCIATED ACTIN-DEPENDENT REGULATOR OF CHROMATIN SUBFAMILY A-LIKE PROTEIN 1"/>
    <property type="match status" value="1"/>
</dbReference>
<dbReference type="Pfam" id="PF00271">
    <property type="entry name" value="Helicase_C"/>
    <property type="match status" value="1"/>
</dbReference>
<dbReference type="Pfam" id="PF12137">
    <property type="entry name" value="RapA_C"/>
    <property type="match status" value="1"/>
</dbReference>
<dbReference type="Pfam" id="PF00176">
    <property type="entry name" value="SNF2-rel_dom"/>
    <property type="match status" value="1"/>
</dbReference>
<dbReference type="Pfam" id="PF18339">
    <property type="entry name" value="Tudor_1_RapA"/>
    <property type="match status" value="1"/>
</dbReference>
<dbReference type="Pfam" id="PF18337">
    <property type="entry name" value="Tudor_RapA"/>
    <property type="match status" value="1"/>
</dbReference>
<dbReference type="SMART" id="SM00487">
    <property type="entry name" value="DEXDc"/>
    <property type="match status" value="1"/>
</dbReference>
<dbReference type="SMART" id="SM00490">
    <property type="entry name" value="HELICc"/>
    <property type="match status" value="1"/>
</dbReference>
<dbReference type="SUPFAM" id="SSF52540">
    <property type="entry name" value="P-loop containing nucleoside triphosphate hydrolases"/>
    <property type="match status" value="2"/>
</dbReference>
<dbReference type="PROSITE" id="PS51192">
    <property type="entry name" value="HELICASE_ATP_BIND_1"/>
    <property type="match status" value="1"/>
</dbReference>
<dbReference type="PROSITE" id="PS51194">
    <property type="entry name" value="HELICASE_CTER"/>
    <property type="match status" value="1"/>
</dbReference>